<protein>
    <recommendedName>
        <fullName evidence="1">Bifunctional uridylyltransferase/uridylyl-removing enzyme</fullName>
        <shortName evidence="1">UTase/UR</shortName>
    </recommendedName>
    <alternativeName>
        <fullName evidence="1">Bifunctional [protein-PII] modification enzyme</fullName>
    </alternativeName>
    <alternativeName>
        <fullName evidence="1">Bifunctional nitrogen sensor protein</fullName>
    </alternativeName>
    <domain>
        <recommendedName>
            <fullName evidence="1">[Protein-PII] uridylyltransferase</fullName>
            <shortName evidence="1">PII uridylyltransferase</shortName>
            <shortName evidence="1">UTase</shortName>
            <ecNumber evidence="1">2.7.7.59</ecNumber>
        </recommendedName>
    </domain>
    <domain>
        <recommendedName>
            <fullName evidence="1">[Protein-PII]-UMP uridylyl-removing enzyme</fullName>
            <shortName evidence="1">UR</shortName>
            <ecNumber evidence="1">3.1.4.-</ecNumber>
        </recommendedName>
    </domain>
</protein>
<proteinExistence type="inferred from homology"/>
<organism>
    <name type="scientific">Acinetobacter baumannii (strain ATCC 17978 / DSM 105126 / CIP 53.77 / LMG 1025 / NCDC KC755 / 5377)</name>
    <dbReference type="NCBI Taxonomy" id="400667"/>
    <lineage>
        <taxon>Bacteria</taxon>
        <taxon>Pseudomonadati</taxon>
        <taxon>Pseudomonadota</taxon>
        <taxon>Gammaproteobacteria</taxon>
        <taxon>Moraxellales</taxon>
        <taxon>Moraxellaceae</taxon>
        <taxon>Acinetobacter</taxon>
        <taxon>Acinetobacter calcoaceticus/baumannii complex</taxon>
    </lineage>
</organism>
<reference key="1">
    <citation type="journal article" date="2007" name="Genes Dev.">
        <title>New insights into Acinetobacter baumannii pathogenesis revealed by high-density pyrosequencing and transposon mutagenesis.</title>
        <authorList>
            <person name="Smith M.G."/>
            <person name="Gianoulis T.A."/>
            <person name="Pukatzki S."/>
            <person name="Mekalanos J.J."/>
            <person name="Ornston L.N."/>
            <person name="Gerstein M."/>
            <person name="Snyder M."/>
        </authorList>
    </citation>
    <scope>NUCLEOTIDE SEQUENCE [LARGE SCALE GENOMIC DNA]</scope>
    <source>
        <strain>ATCC 17978 / DSM 105126 / CIP 53.77 / LMG 1025 / NCDC KC755 / 5377</strain>
    </source>
</reference>
<accession>A3M4Q8</accession>
<keyword id="KW-0378">Hydrolase</keyword>
<keyword id="KW-0460">Magnesium</keyword>
<keyword id="KW-0511">Multifunctional enzyme</keyword>
<keyword id="KW-0548">Nucleotidyltransferase</keyword>
<keyword id="KW-0677">Repeat</keyword>
<keyword id="KW-0808">Transferase</keyword>
<evidence type="ECO:0000255" key="1">
    <source>
        <dbReference type="HAMAP-Rule" id="MF_00277"/>
    </source>
</evidence>
<evidence type="ECO:0000255" key="2">
    <source>
        <dbReference type="PROSITE-ProRule" id="PRU01175"/>
    </source>
</evidence>
<dbReference type="EC" id="2.7.7.59" evidence="1"/>
<dbReference type="EC" id="3.1.4.-" evidence="1"/>
<dbReference type="EMBL" id="CP000521">
    <property type="protein sequence ID" value="ABO11902.2"/>
    <property type="molecule type" value="Genomic_DNA"/>
</dbReference>
<dbReference type="RefSeq" id="WP_000611177.1">
    <property type="nucleotide sequence ID" value="NZ_CP053098.1"/>
</dbReference>
<dbReference type="SMR" id="A3M4Q8"/>
<dbReference type="KEGG" id="acb:A1S_1474"/>
<dbReference type="HOGENOM" id="CLU_012833_0_0_6"/>
<dbReference type="GO" id="GO:0008773">
    <property type="term" value="F:[protein-PII] uridylyltransferase activity"/>
    <property type="evidence" value="ECO:0007669"/>
    <property type="project" value="UniProtKB-UniRule"/>
</dbReference>
<dbReference type="GO" id="GO:0008081">
    <property type="term" value="F:phosphoric diester hydrolase activity"/>
    <property type="evidence" value="ECO:0007669"/>
    <property type="project" value="UniProtKB-UniRule"/>
</dbReference>
<dbReference type="GO" id="GO:0006808">
    <property type="term" value="P:regulation of nitrogen utilization"/>
    <property type="evidence" value="ECO:0007669"/>
    <property type="project" value="UniProtKB-UniRule"/>
</dbReference>
<dbReference type="CDD" id="cd04899">
    <property type="entry name" value="ACT_ACR-UUR-like_2"/>
    <property type="match status" value="1"/>
</dbReference>
<dbReference type="CDD" id="cd04900">
    <property type="entry name" value="ACT_UUR-like_1"/>
    <property type="match status" value="1"/>
</dbReference>
<dbReference type="CDD" id="cd00077">
    <property type="entry name" value="HDc"/>
    <property type="match status" value="1"/>
</dbReference>
<dbReference type="CDD" id="cd05401">
    <property type="entry name" value="NT_GlnE_GlnD_like"/>
    <property type="match status" value="1"/>
</dbReference>
<dbReference type="Gene3D" id="1.10.3210.10">
    <property type="entry name" value="Hypothetical protein af1432"/>
    <property type="match status" value="1"/>
</dbReference>
<dbReference type="Gene3D" id="1.20.120.330">
    <property type="entry name" value="Nucleotidyltransferases domain 2"/>
    <property type="match status" value="1"/>
</dbReference>
<dbReference type="HAMAP" id="MF_00277">
    <property type="entry name" value="PII_uridylyl_transf"/>
    <property type="match status" value="1"/>
</dbReference>
<dbReference type="InterPro" id="IPR045865">
    <property type="entry name" value="ACT-like_dom_sf"/>
</dbReference>
<dbReference type="InterPro" id="IPR002912">
    <property type="entry name" value="ACT_dom"/>
</dbReference>
<dbReference type="InterPro" id="IPR003607">
    <property type="entry name" value="HD/PDEase_dom"/>
</dbReference>
<dbReference type="InterPro" id="IPR006674">
    <property type="entry name" value="HD_domain"/>
</dbReference>
<dbReference type="InterPro" id="IPR043519">
    <property type="entry name" value="NT_sf"/>
</dbReference>
<dbReference type="InterPro" id="IPR013546">
    <property type="entry name" value="PII_UdlTrfase/GS_AdlTrfase"/>
</dbReference>
<dbReference type="InterPro" id="IPR002934">
    <property type="entry name" value="Polymerase_NTP_transf_dom"/>
</dbReference>
<dbReference type="InterPro" id="IPR010043">
    <property type="entry name" value="UTase/UR"/>
</dbReference>
<dbReference type="NCBIfam" id="TIGR01693">
    <property type="entry name" value="UTase_glnD"/>
    <property type="match status" value="1"/>
</dbReference>
<dbReference type="PANTHER" id="PTHR47320">
    <property type="entry name" value="BIFUNCTIONAL URIDYLYLTRANSFERASE/URIDYLYL-REMOVING ENZYME"/>
    <property type="match status" value="1"/>
</dbReference>
<dbReference type="PANTHER" id="PTHR47320:SF1">
    <property type="entry name" value="BIFUNCTIONAL URIDYLYLTRANSFERASE_URIDYLYL-REMOVING ENZYME"/>
    <property type="match status" value="1"/>
</dbReference>
<dbReference type="Pfam" id="PF01842">
    <property type="entry name" value="ACT"/>
    <property type="match status" value="1"/>
</dbReference>
<dbReference type="Pfam" id="PF08335">
    <property type="entry name" value="GlnD_UR_UTase"/>
    <property type="match status" value="1"/>
</dbReference>
<dbReference type="Pfam" id="PF01966">
    <property type="entry name" value="HD"/>
    <property type="match status" value="1"/>
</dbReference>
<dbReference type="Pfam" id="PF01909">
    <property type="entry name" value="NTP_transf_2"/>
    <property type="match status" value="1"/>
</dbReference>
<dbReference type="PIRSF" id="PIRSF006288">
    <property type="entry name" value="PII_uridyltransf"/>
    <property type="match status" value="1"/>
</dbReference>
<dbReference type="SMART" id="SM00471">
    <property type="entry name" value="HDc"/>
    <property type="match status" value="1"/>
</dbReference>
<dbReference type="SUPFAM" id="SSF55021">
    <property type="entry name" value="ACT-like"/>
    <property type="match status" value="1"/>
</dbReference>
<dbReference type="SUPFAM" id="SSF109604">
    <property type="entry name" value="HD-domain/PDEase-like"/>
    <property type="match status" value="1"/>
</dbReference>
<dbReference type="SUPFAM" id="SSF81301">
    <property type="entry name" value="Nucleotidyltransferase"/>
    <property type="match status" value="1"/>
</dbReference>
<dbReference type="SUPFAM" id="SSF81593">
    <property type="entry name" value="Nucleotidyltransferase substrate binding subunit/domain"/>
    <property type="match status" value="1"/>
</dbReference>
<dbReference type="PROSITE" id="PS51671">
    <property type="entry name" value="ACT"/>
    <property type="match status" value="2"/>
</dbReference>
<dbReference type="PROSITE" id="PS51831">
    <property type="entry name" value="HD"/>
    <property type="match status" value="1"/>
</dbReference>
<feature type="chain" id="PRO_1000114748" description="Bifunctional uridylyltransferase/uridylyl-removing enzyme">
    <location>
        <begin position="1"/>
        <end position="887"/>
    </location>
</feature>
<feature type="domain" description="HD" evidence="2">
    <location>
        <begin position="457"/>
        <end position="579"/>
    </location>
</feature>
<feature type="domain" description="ACT 1" evidence="1">
    <location>
        <begin position="700"/>
        <end position="782"/>
    </location>
</feature>
<feature type="domain" description="ACT 2" evidence="1">
    <location>
        <begin position="809"/>
        <end position="887"/>
    </location>
</feature>
<feature type="region of interest" description="Uridylyltransferase">
    <location>
        <begin position="1"/>
        <end position="337"/>
    </location>
</feature>
<feature type="region of interest" description="Uridylyl-removing">
    <location>
        <begin position="339"/>
        <end position="699"/>
    </location>
</feature>
<sequence length="887" mass="102126">MINTSPLLNYVSSHHDIKAINQWRTDVEKQLQDSYENGQSIREIIKARSDLVDEALVFLWKHAELDQSKLGLFAVGGYGRREMLPYSDVDIMILSEDEISEENEKRISTFISSLWDVGNFKPGISVRTIQSCVEQAATDLTVATTLIEARLITGNTQLAKWPRRIVSQTWTDKTFYDAKMAEQAKRYHQHNNTESNLEPDIKNAPGGIRDINQIGWIAKRHFRVNRIYDLVHLGFISEFELAVLEEAESFLWEIRHHLHRLAKRDENRLLFDHQREIAAKFGYVRQEGQPVNYGVEQFMKRYYRTAQQVSTLNEMLLAYFSESVITPRLPNYERKIEVVNDHFKIVDNKLAVQHHKIFAEHPSAILELFYILANRPDIEGIRARTLRLLILAAKRINQSYRDNPEHQALFMSIIRSPYRLYDTLVAMKRYGVLGNYIPAFGQIMGLMQYDLFHIYTVDAHTLLLLRNLNRFREPEFAKEFPVVSSVFQRLARQDIVFIAALFHDIAKGRGGDHSELGAEDAIEFGRAHGFTERECKLIAWLIQNHLLMSLTAQKKDISDPDVVKDFAEKLGDMEHLDYLYTLTVADINATNPKLWNTWRASLMRQLYTHARDVIRTGLGRPVDYQMLIEDTKFAASELLVNNFALADVEKVWQELGDEYFIKESADEIAWHTQAILKHGDNPEPLVLLRAHRKAAQDAVQIFIYTRDQPNLFATTVAVLDRMNLDVQDAKIITASTAFSLDTYVVLDRFGTLLTDPEREETVKNALVKALSQPDQYPGLMQRRIPRQLRHFDIENTVDVTLNEALQQNMVEISTLDHPGLLARVGGLFMMQGLDIHSARIATLGERAEDIFFVTKKDGKPLNHEEVKLFSEKLKAALDEASNQICQH</sequence>
<name>GLND_ACIBT</name>
<gene>
    <name evidence="1" type="primary">glnD</name>
    <name type="ordered locus">A1S_1474</name>
</gene>
<comment type="function">
    <text evidence="1">Modifies, by uridylylation and deuridylylation, the PII regulatory proteins (GlnB and homologs), in response to the nitrogen status of the cell that GlnD senses through the glutamine level. Under low glutamine levels, catalyzes the conversion of the PII proteins and UTP to PII-UMP and PPi, while under higher glutamine levels, GlnD hydrolyzes PII-UMP to PII and UMP (deuridylylation). Thus, controls uridylylation state and activity of the PII proteins, and plays an important role in the regulation of nitrogen assimilation and metabolism.</text>
</comment>
<comment type="catalytic activity">
    <reaction evidence="1">
        <text>[protein-PII]-L-tyrosine + UTP = [protein-PII]-uridylyl-L-tyrosine + diphosphate</text>
        <dbReference type="Rhea" id="RHEA:13673"/>
        <dbReference type="Rhea" id="RHEA-COMP:12147"/>
        <dbReference type="Rhea" id="RHEA-COMP:12148"/>
        <dbReference type="ChEBI" id="CHEBI:33019"/>
        <dbReference type="ChEBI" id="CHEBI:46398"/>
        <dbReference type="ChEBI" id="CHEBI:46858"/>
        <dbReference type="ChEBI" id="CHEBI:90602"/>
        <dbReference type="EC" id="2.7.7.59"/>
    </reaction>
</comment>
<comment type="catalytic activity">
    <reaction evidence="1">
        <text>[protein-PII]-uridylyl-L-tyrosine + H2O = [protein-PII]-L-tyrosine + UMP + H(+)</text>
        <dbReference type="Rhea" id="RHEA:48600"/>
        <dbReference type="Rhea" id="RHEA-COMP:12147"/>
        <dbReference type="Rhea" id="RHEA-COMP:12148"/>
        <dbReference type="ChEBI" id="CHEBI:15377"/>
        <dbReference type="ChEBI" id="CHEBI:15378"/>
        <dbReference type="ChEBI" id="CHEBI:46858"/>
        <dbReference type="ChEBI" id="CHEBI:57865"/>
        <dbReference type="ChEBI" id="CHEBI:90602"/>
    </reaction>
</comment>
<comment type="cofactor">
    <cofactor evidence="1">
        <name>Mg(2+)</name>
        <dbReference type="ChEBI" id="CHEBI:18420"/>
    </cofactor>
</comment>
<comment type="activity regulation">
    <text evidence="1">Uridylyltransferase (UTase) activity is inhibited by glutamine, while glutamine activates uridylyl-removing (UR) activity.</text>
</comment>
<comment type="domain">
    <text evidence="1">Has four distinct domains: an N-terminal nucleotidyltransferase (NT) domain responsible for UTase activity, a central HD domain that encodes UR activity, and two C-terminal ACT domains that seem to have a role in glutamine sensing.</text>
</comment>
<comment type="similarity">
    <text evidence="1">Belongs to the GlnD family.</text>
</comment>